<organism>
    <name type="scientific">Drosophila melanogaster</name>
    <name type="common">Fruit fly</name>
    <dbReference type="NCBI Taxonomy" id="7227"/>
    <lineage>
        <taxon>Eukaryota</taxon>
        <taxon>Metazoa</taxon>
        <taxon>Ecdysozoa</taxon>
        <taxon>Arthropoda</taxon>
        <taxon>Hexapoda</taxon>
        <taxon>Insecta</taxon>
        <taxon>Pterygota</taxon>
        <taxon>Neoptera</taxon>
        <taxon>Endopterygota</taxon>
        <taxon>Diptera</taxon>
        <taxon>Brachycera</taxon>
        <taxon>Muscomorpha</taxon>
        <taxon>Ephydroidea</taxon>
        <taxon>Drosophilidae</taxon>
        <taxon>Drosophila</taxon>
        <taxon>Sophophora</taxon>
    </lineage>
</organism>
<gene>
    <name type="primary">spri</name>
    <name type="ORF">CG33175</name>
    <name type="ORF">CG34414</name>
</gene>
<proteinExistence type="evidence at transcript level"/>
<sequence>MVNAVMDAIALLSSLASDLDIMLNDLRSAPSHAATATATATTTATVATATATTTANRQQQHHNHHNQQQMQSRQLHAHHWQSINNNKNNNISNKNNNNNNNNNNNINNNNNNNNHSAHPPCLIDIKLKSSRSAATKITHTTTANQLQQQQRRRVAPKPLPRPPRRTRPTGQKEVGPSEEDGDTDASDLANMTSPLSASAAATRINGLSPEVKKVQRLPLWNARNGNGSTTTHCHPTGVSVQRRLPIQSHQQRILNQRFHHQRMHHGTSEPIPSGVATPSSLDSASVDGGKSHTGNNNNINNNHNGQQSQKSQQQAGLAAKLNVLAQSNLNNNNTTNQPGSMTPASNRTGLDSNQNQKQNLNADSRRSSSVDPDADADDVVDAAHGGAFEDDMQALLPKCSRRSRDELSQSRTSLVSSSEGGILAEGETSSEDDEEEPVEAEDEGEESSRDSSDNSPPCDLGLMERLLVTHPMWFLPGIQRSGAVHLLQGKEEGTFIVRGSSQPNTMAVSVRLPQDTGPYIEHYLIQSHDNVLSLESSRFTFGSIPSLIAHYAQCCDELPVQLMLPRVLREANNRKKLSSLALLGQEFWSYVSSPALLGPLTPSVAPSKDQQLLDAKSPLSLTETSGLGTATFFSDTVSKPPPTGAPPLPGGGLFSPTGSGQLLGFFSQAGTPSDTTNSSLSSFTTSGGQHMQLLSPNSVDSVILTMSPVDNPGHYLPGSTGAPMAPLCPSVVDQQLSTFKVAQTAPEVDQVRPQRPKPPNTLNLKPPAPPLRWSKPHSPDQNGSANGNFTVTTTVTFSMENGGGGGSGPTVGNGNGKFVEVTTPAASNPFNALLNGQASTFQTFAKRLSPEGECKDTLSSQGSSSNDSRWPPPARKLLTSPMTPLTPSGGSSSSGGKSRKSRAGKESQHYKESDILESPPMQYCASALSDKISDYEDVWSHDPSDRASLLTSFRPALDTVGGVMNRRPDLLAETPSTPTPTQQSHLTPCEEETTATPNESSSQSLLQFSGDVPARSRAGLLLPNLSGQVPPVAMTKSMTAAEDDGGDTTPTAEGQANGASRSKQGSPFYAEPADALRQAGLTSAATAILRRQHRSQMLHASQRHSEPLKAGFGGSGNGAMLQPSDLEKLAGSLDELKPKPKVSQQQQQSQQQQQPTKRARNRIDHWQLDSSWEFMAKQDTGSHAGGDYDTAAIDWQEKENSLGRDSRADGQGKKRTLTIHQIIANRLPDLNLPELVRCSTPPQTAALQPHVLGQDKAGVGCDGSQKSFQSQIGCRLSSYDNVFCQNSFGGIDSAQSDDGTIFSEPWDSSQWDTFLPHDDATINSDTIHLSKCRPALSEDDTIVEELQSTKDGSNGSCNQDTLKANRNGAGHHKLNNGNGNGKANNRPKVATILRNPSMRDREVLCHPRNKMSIQSSGPGDSLRAYTLQLAQDPSSTFARNIENFICCTKESREAAPQVVMRNMRQFMSGMKNYLVKHGEGKFHAELETARARLKSDEFLNLDAMLETVMHQLVVLPLREHLYGIFVDHYQRSEDIQLLAQNVRYACEREAADFGIRPTVTPPSQAALRLIANLLWRLQEAELPLDKLELFLCVISTVFDATGCPRGQQLGADDFLPVLVYVVAKCGFVGAEIEAEFMWGLLQPTLLNGEPGYYLTALCSAVQVLKTFMASEGESGSGSLDWRSSCLPACSSVLRVIIPDECNGSLQTRTLPVRPHTTTREVCRIIAHKARITNPQDYALFKLVDGEETLLTDAECPQDARLAAKGKHCMLAYKRIDAKIAWPTAQLAGH</sequence>
<accession>Q8MQW8</accession>
<accession>M9PE83</accession>
<accession>M9PGU3</accession>
<accession>M9PH67</accession>
<accession>M9PHI9</accession>
<accession>M9PJH2</accession>
<accession>M9PJH3</accession>
<accession>Q3KN60</accession>
<accession>Q8MQV9</accession>
<accession>Q8T4E9</accession>
<accession>Q9BK48</accession>
<accession>Q9BK49</accession>
<accession>Q9W2T4</accession>
<accession>Q9W2T7</accession>
<accession>Q9W2U1</accession>
<accession>T2GGG1</accession>
<protein>
    <recommendedName>
        <fullName>Protein sprint</fullName>
    </recommendedName>
    <alternativeName>
        <fullName>SH2 poly-proline-containing Ras-interactor protein</fullName>
    </alternativeName>
</protein>
<reference key="1">
    <citation type="journal article" date="2001" name="Mech. Dev.">
        <title>Cloning and expression of sprint, a Drosophila homologue of RIN1.</title>
        <authorList>
            <person name="Szabo K."/>
            <person name="Jekely G."/>
            <person name="Rorth P."/>
        </authorList>
    </citation>
    <scope>NUCLEOTIDE SEQUENCE [MRNA] (ISOFORMS 1 AND 2)</scope>
    <scope>DEVELOPMENTAL STAGE</scope>
    <scope>TISSUE SPECIFICITY</scope>
</reference>
<reference key="2">
    <citation type="journal article" date="2000" name="Science">
        <title>The genome sequence of Drosophila melanogaster.</title>
        <authorList>
            <person name="Adams M.D."/>
            <person name="Celniker S.E."/>
            <person name="Holt R.A."/>
            <person name="Evans C.A."/>
            <person name="Gocayne J.D."/>
            <person name="Amanatides P.G."/>
            <person name="Scherer S.E."/>
            <person name="Li P.W."/>
            <person name="Hoskins R.A."/>
            <person name="Galle R.F."/>
            <person name="George R.A."/>
            <person name="Lewis S.E."/>
            <person name="Richards S."/>
            <person name="Ashburner M."/>
            <person name="Henderson S.N."/>
            <person name="Sutton G.G."/>
            <person name="Wortman J.R."/>
            <person name="Yandell M.D."/>
            <person name="Zhang Q."/>
            <person name="Chen L.X."/>
            <person name="Brandon R.C."/>
            <person name="Rogers Y.-H.C."/>
            <person name="Blazej R.G."/>
            <person name="Champe M."/>
            <person name="Pfeiffer B.D."/>
            <person name="Wan K.H."/>
            <person name="Doyle C."/>
            <person name="Baxter E.G."/>
            <person name="Helt G."/>
            <person name="Nelson C.R."/>
            <person name="Miklos G.L.G."/>
            <person name="Abril J.F."/>
            <person name="Agbayani A."/>
            <person name="An H.-J."/>
            <person name="Andrews-Pfannkoch C."/>
            <person name="Baldwin D."/>
            <person name="Ballew R.M."/>
            <person name="Basu A."/>
            <person name="Baxendale J."/>
            <person name="Bayraktaroglu L."/>
            <person name="Beasley E.M."/>
            <person name="Beeson K.Y."/>
            <person name="Benos P.V."/>
            <person name="Berman B.P."/>
            <person name="Bhandari D."/>
            <person name="Bolshakov S."/>
            <person name="Borkova D."/>
            <person name="Botchan M.R."/>
            <person name="Bouck J."/>
            <person name="Brokstein P."/>
            <person name="Brottier P."/>
            <person name="Burtis K.C."/>
            <person name="Busam D.A."/>
            <person name="Butler H."/>
            <person name="Cadieu E."/>
            <person name="Center A."/>
            <person name="Chandra I."/>
            <person name="Cherry J.M."/>
            <person name="Cawley S."/>
            <person name="Dahlke C."/>
            <person name="Davenport L.B."/>
            <person name="Davies P."/>
            <person name="de Pablos B."/>
            <person name="Delcher A."/>
            <person name="Deng Z."/>
            <person name="Mays A.D."/>
            <person name="Dew I."/>
            <person name="Dietz S.M."/>
            <person name="Dodson K."/>
            <person name="Doup L.E."/>
            <person name="Downes M."/>
            <person name="Dugan-Rocha S."/>
            <person name="Dunkov B.C."/>
            <person name="Dunn P."/>
            <person name="Durbin K.J."/>
            <person name="Evangelista C.C."/>
            <person name="Ferraz C."/>
            <person name="Ferriera S."/>
            <person name="Fleischmann W."/>
            <person name="Fosler C."/>
            <person name="Gabrielian A.E."/>
            <person name="Garg N.S."/>
            <person name="Gelbart W.M."/>
            <person name="Glasser K."/>
            <person name="Glodek A."/>
            <person name="Gong F."/>
            <person name="Gorrell J.H."/>
            <person name="Gu Z."/>
            <person name="Guan P."/>
            <person name="Harris M."/>
            <person name="Harris N.L."/>
            <person name="Harvey D.A."/>
            <person name="Heiman T.J."/>
            <person name="Hernandez J.R."/>
            <person name="Houck J."/>
            <person name="Hostin D."/>
            <person name="Houston K.A."/>
            <person name="Howland T.J."/>
            <person name="Wei M.-H."/>
            <person name="Ibegwam C."/>
            <person name="Jalali M."/>
            <person name="Kalush F."/>
            <person name="Karpen G.H."/>
            <person name="Ke Z."/>
            <person name="Kennison J.A."/>
            <person name="Ketchum K.A."/>
            <person name="Kimmel B.E."/>
            <person name="Kodira C.D."/>
            <person name="Kraft C.L."/>
            <person name="Kravitz S."/>
            <person name="Kulp D."/>
            <person name="Lai Z."/>
            <person name="Lasko P."/>
            <person name="Lei Y."/>
            <person name="Levitsky A.A."/>
            <person name="Li J.H."/>
            <person name="Li Z."/>
            <person name="Liang Y."/>
            <person name="Lin X."/>
            <person name="Liu X."/>
            <person name="Mattei B."/>
            <person name="McIntosh T.C."/>
            <person name="McLeod M.P."/>
            <person name="McPherson D."/>
            <person name="Merkulov G."/>
            <person name="Milshina N.V."/>
            <person name="Mobarry C."/>
            <person name="Morris J."/>
            <person name="Moshrefi A."/>
            <person name="Mount S.M."/>
            <person name="Moy M."/>
            <person name="Murphy B."/>
            <person name="Murphy L."/>
            <person name="Muzny D.M."/>
            <person name="Nelson D.L."/>
            <person name="Nelson D.R."/>
            <person name="Nelson K.A."/>
            <person name="Nixon K."/>
            <person name="Nusskern D.R."/>
            <person name="Pacleb J.M."/>
            <person name="Palazzolo M."/>
            <person name="Pittman G.S."/>
            <person name="Pan S."/>
            <person name="Pollard J."/>
            <person name="Puri V."/>
            <person name="Reese M.G."/>
            <person name="Reinert K."/>
            <person name="Remington K."/>
            <person name="Saunders R.D.C."/>
            <person name="Scheeler F."/>
            <person name="Shen H."/>
            <person name="Shue B.C."/>
            <person name="Siden-Kiamos I."/>
            <person name="Simpson M."/>
            <person name="Skupski M.P."/>
            <person name="Smith T.J."/>
            <person name="Spier E."/>
            <person name="Spradling A.C."/>
            <person name="Stapleton M."/>
            <person name="Strong R."/>
            <person name="Sun E."/>
            <person name="Svirskas R."/>
            <person name="Tector C."/>
            <person name="Turner R."/>
            <person name="Venter E."/>
            <person name="Wang A.H."/>
            <person name="Wang X."/>
            <person name="Wang Z.-Y."/>
            <person name="Wassarman D.A."/>
            <person name="Weinstock G.M."/>
            <person name="Weissenbach J."/>
            <person name="Williams S.M."/>
            <person name="Woodage T."/>
            <person name="Worley K.C."/>
            <person name="Wu D."/>
            <person name="Yang S."/>
            <person name="Yao Q.A."/>
            <person name="Ye J."/>
            <person name="Yeh R.-F."/>
            <person name="Zaveri J.S."/>
            <person name="Zhan M."/>
            <person name="Zhang G."/>
            <person name="Zhao Q."/>
            <person name="Zheng L."/>
            <person name="Zheng X.H."/>
            <person name="Zhong F.N."/>
            <person name="Zhong W."/>
            <person name="Zhou X."/>
            <person name="Zhu S.C."/>
            <person name="Zhu X."/>
            <person name="Smith H.O."/>
            <person name="Gibbs R.A."/>
            <person name="Myers E.W."/>
            <person name="Rubin G.M."/>
            <person name="Venter J.C."/>
        </authorList>
    </citation>
    <scope>NUCLEOTIDE SEQUENCE [LARGE SCALE GENOMIC DNA]</scope>
    <source>
        <strain>Berkeley</strain>
    </source>
</reference>
<reference key="3">
    <citation type="journal article" date="2002" name="Genome Biol.">
        <title>Annotation of the Drosophila melanogaster euchromatic genome: a systematic review.</title>
        <authorList>
            <person name="Misra S."/>
            <person name="Crosby M.A."/>
            <person name="Mungall C.J."/>
            <person name="Matthews B.B."/>
            <person name="Campbell K.S."/>
            <person name="Hradecky P."/>
            <person name="Huang Y."/>
            <person name="Kaminker J.S."/>
            <person name="Millburn G.H."/>
            <person name="Prochnik S.E."/>
            <person name="Smith C.D."/>
            <person name="Tupy J.L."/>
            <person name="Whitfield E.J."/>
            <person name="Bayraktaroglu L."/>
            <person name="Berman B.P."/>
            <person name="Bettencourt B.R."/>
            <person name="Celniker S.E."/>
            <person name="de Grey A.D.N.J."/>
            <person name="Drysdale R.A."/>
            <person name="Harris N.L."/>
            <person name="Richter J."/>
            <person name="Russo S."/>
            <person name="Schroeder A.J."/>
            <person name="Shu S.Q."/>
            <person name="Stapleton M."/>
            <person name="Yamada C."/>
            <person name="Ashburner M."/>
            <person name="Gelbart W.M."/>
            <person name="Rubin G.M."/>
            <person name="Lewis S.E."/>
        </authorList>
    </citation>
    <scope>GENOME REANNOTATION</scope>
    <scope>ALTERNATIVE SPLICING</scope>
    <source>
        <strain>Berkeley</strain>
    </source>
</reference>
<reference key="4">
    <citation type="journal article" date="2002" name="Genome Biol.">
        <title>A Drosophila full-length cDNA resource.</title>
        <authorList>
            <person name="Stapleton M."/>
            <person name="Carlson J.W."/>
            <person name="Brokstein P."/>
            <person name="Yu C."/>
            <person name="Champe M."/>
            <person name="George R.A."/>
            <person name="Guarin H."/>
            <person name="Kronmiller B."/>
            <person name="Pacleb J.M."/>
            <person name="Park S."/>
            <person name="Wan K.H."/>
            <person name="Rubin G.M."/>
            <person name="Celniker S.E."/>
        </authorList>
    </citation>
    <scope>NUCLEOTIDE SEQUENCE [LARGE SCALE MRNA] (ISOFORMS 2 AND 3)</scope>
    <scope>NUCLEOTIDE SEQUENCE [LARGE SCALE MRNA] OF 1210-1789 (ISOFORMS 1/2)</scope>
    <source>
        <strain>Berkeley</strain>
        <tissue>Embryo</tissue>
        <tissue>Testis</tissue>
    </source>
</reference>
<reference key="5">
    <citation type="submission" date="2005-10" db="EMBL/GenBank/DDBJ databases">
        <authorList>
            <person name="Stapleton M."/>
            <person name="Carlson J.W."/>
            <person name="Chavez C."/>
            <person name="Frise E."/>
            <person name="George R.A."/>
            <person name="Pacleb J.M."/>
            <person name="Park S."/>
            <person name="Wan K.H."/>
            <person name="Yu C."/>
            <person name="Celniker S.E."/>
        </authorList>
    </citation>
    <scope>NUCLEOTIDE SEQUENCE [LARGE SCALE MRNA] (ISOFORM 4)</scope>
    <source>
        <strain>Berkeley</strain>
        <tissue>Embryo</tissue>
    </source>
</reference>
<reference key="6">
    <citation type="submission" date="2013-09" db="EMBL/GenBank/DDBJ databases">
        <authorList>
            <person name="Carlson J."/>
            <person name="Booth B."/>
            <person name="Frise E."/>
            <person name="Park S."/>
            <person name="Wan K."/>
            <person name="Yu C."/>
            <person name="Celniker S."/>
        </authorList>
    </citation>
    <scope>NUCLEOTIDE SEQUENCE [LARGE SCALE MRNA] (ISOFORMS 3 AND 4)</scope>
    <source>
        <strain>Berkeley</strain>
    </source>
</reference>
<feature type="chain" id="PRO_0000072152" description="Protein sprint">
    <location>
        <begin position="1"/>
        <end position="1789"/>
    </location>
</feature>
<feature type="domain" description="SH2" evidence="3">
    <location>
        <begin position="473"/>
        <end position="566"/>
    </location>
</feature>
<feature type="domain" description="VPS9" evidence="4">
    <location>
        <begin position="1531"/>
        <end position="1673"/>
    </location>
</feature>
<feature type="domain" description="Ras-associating" evidence="2">
    <location>
        <begin position="1689"/>
        <end position="1777"/>
    </location>
</feature>
<feature type="region of interest" description="Disordered" evidence="5">
    <location>
        <begin position="53"/>
        <end position="120"/>
    </location>
</feature>
<feature type="region of interest" description="Disordered" evidence="5">
    <location>
        <begin position="140"/>
        <end position="190"/>
    </location>
</feature>
<feature type="region of interest" description="Disordered" evidence="5">
    <location>
        <begin position="218"/>
        <end position="237"/>
    </location>
</feature>
<feature type="region of interest" description="Disordered" evidence="5">
    <location>
        <begin position="261"/>
        <end position="317"/>
    </location>
</feature>
<feature type="region of interest" description="Disordered" evidence="5">
    <location>
        <begin position="329"/>
        <end position="378"/>
    </location>
</feature>
<feature type="region of interest" description="Disordered" evidence="5">
    <location>
        <begin position="401"/>
        <end position="460"/>
    </location>
</feature>
<feature type="region of interest" description="Disordered" evidence="5">
    <location>
        <begin position="632"/>
        <end position="689"/>
    </location>
</feature>
<feature type="region of interest" description="Disordered" evidence="5">
    <location>
        <begin position="744"/>
        <end position="787"/>
    </location>
</feature>
<feature type="region of interest" description="Disordered" evidence="5">
    <location>
        <begin position="852"/>
        <end position="918"/>
    </location>
</feature>
<feature type="region of interest" description="Disordered" evidence="5">
    <location>
        <begin position="969"/>
        <end position="1006"/>
    </location>
</feature>
<feature type="region of interest" description="Disordered" evidence="5">
    <location>
        <begin position="1040"/>
        <end position="1067"/>
    </location>
</feature>
<feature type="region of interest" description="Disordered" evidence="5">
    <location>
        <begin position="1094"/>
        <end position="1123"/>
    </location>
</feature>
<feature type="region of interest" description="Disordered" evidence="5">
    <location>
        <begin position="1138"/>
        <end position="1160"/>
    </location>
</feature>
<feature type="compositionally biased region" description="Low complexity" evidence="5">
    <location>
        <begin position="82"/>
        <end position="114"/>
    </location>
</feature>
<feature type="compositionally biased region" description="Polar residues" evidence="5">
    <location>
        <begin position="140"/>
        <end position="149"/>
    </location>
</feature>
<feature type="compositionally biased region" description="Acidic residues" evidence="5">
    <location>
        <begin position="176"/>
        <end position="185"/>
    </location>
</feature>
<feature type="compositionally biased region" description="Polar residues" evidence="5">
    <location>
        <begin position="223"/>
        <end position="233"/>
    </location>
</feature>
<feature type="compositionally biased region" description="Low complexity" evidence="5">
    <location>
        <begin position="295"/>
        <end position="317"/>
    </location>
</feature>
<feature type="compositionally biased region" description="Polar residues" evidence="5">
    <location>
        <begin position="337"/>
        <end position="361"/>
    </location>
</feature>
<feature type="compositionally biased region" description="Low complexity" evidence="5">
    <location>
        <begin position="409"/>
        <end position="418"/>
    </location>
</feature>
<feature type="compositionally biased region" description="Acidic residues" evidence="5">
    <location>
        <begin position="428"/>
        <end position="445"/>
    </location>
</feature>
<feature type="compositionally biased region" description="Pro residues" evidence="5">
    <location>
        <begin position="639"/>
        <end position="649"/>
    </location>
</feature>
<feature type="compositionally biased region" description="Low complexity" evidence="5">
    <location>
        <begin position="671"/>
        <end position="686"/>
    </location>
</feature>
<feature type="compositionally biased region" description="Polar residues" evidence="5">
    <location>
        <begin position="857"/>
        <end position="868"/>
    </location>
</feature>
<feature type="compositionally biased region" description="Basic and acidic residues" evidence="5">
    <location>
        <begin position="903"/>
        <end position="914"/>
    </location>
</feature>
<feature type="compositionally biased region" description="Low complexity" evidence="5">
    <location>
        <begin position="974"/>
        <end position="984"/>
    </location>
</feature>
<feature type="compositionally biased region" description="Polar residues" evidence="5">
    <location>
        <begin position="994"/>
        <end position="1006"/>
    </location>
</feature>
<feature type="compositionally biased region" description="Polar residues" evidence="5">
    <location>
        <begin position="1048"/>
        <end position="1065"/>
    </location>
</feature>
<feature type="compositionally biased region" description="Low complexity" evidence="5">
    <location>
        <begin position="1143"/>
        <end position="1154"/>
    </location>
</feature>
<feature type="splice variant" id="VSP_054721" description="In isoform 8." evidence="11">
    <location>
        <begin position="1"/>
        <end position="1346"/>
    </location>
</feature>
<feature type="splice variant" id="VSP_054722" description="In isoform 9." evidence="11">
    <location>
        <begin position="1"/>
        <end position="1152"/>
    </location>
</feature>
<feature type="splice variant" id="VSP_028886" description="In isoform 4." evidence="9 10">
    <location>
        <begin position="1"/>
        <end position="1068"/>
    </location>
</feature>
<feature type="splice variant" id="VSP_007623" description="In isoform 3." evidence="8 10">
    <location>
        <begin position="1"/>
        <end position="462"/>
    </location>
</feature>
<feature type="splice variant" id="VSP_054723" description="In isoform 5." evidence="11">
    <location>
        <begin position="1"/>
        <end position="340"/>
    </location>
</feature>
<feature type="splice variant" id="VSP_054724" description="In isoform 7." evidence="11">
    <location>
        <begin position="1"/>
        <end position="248"/>
    </location>
</feature>
<feature type="splice variant" id="VSP_007621" description="In isoform 2." evidence="7 8">
    <location>
        <begin position="1"/>
        <end position="13"/>
    </location>
</feature>
<feature type="splice variant" id="VSP_007622" description="In isoform 2." evidence="7 8">
    <original>SLASDLDIMLNDLRSAPSHAATATATATTTATVATATATTTANRQQQHHNHHNQQQMQSRQLHAHHWQSINNNKNNNISNKNNNNNNNNNNNINNNNNNNNHSAHPPCLIDIKLKSSRSAATKITHTTTANQLQQQQRRRVAPKPLPRPPRRTRPTGQKEVGPSEEDGDTDASDLANMTSPLSASAAATRINGLSPEVKKVQRLPLWNARNGNGSTTTHCHPTGVSVQRRLPIQSHQQRILNQRFHHQRMHHG</original>
    <variation>MSHETAAAAVPGGAGASAGSIVSCAENASKVEVIVYTTKSDKTLKQNMNAKDDTLRKRTSLIIVPQQVHDIEVEDEDTKKVDQTKVRENPNRNSTASMDSCVSNTTSQSNQSSGSSSSTTSSSGSSSGSEDAHAAYQDLQNGNAGQDLNSPSPVPRCHSSSSTSSVSESTSCSSSADYSLREQLKNFANRNSEGGGTIDSTARLIKGMSLPVGDQSVQSVAPALCDSLLSPQEVPLGRRYAEVAQFKGHPKAR</variation>
    <location>
        <begin position="14"/>
        <end position="266"/>
    </location>
</feature>
<feature type="splice variant" id="VSP_054725" description="In isoform 7." evidence="11">
    <original>HQQRILNQRFHHQRMHHG</original>
    <variation>MTTTSLGRQILEKFFPFR</variation>
    <location>
        <begin position="249"/>
        <end position="266"/>
    </location>
</feature>
<feature type="splice variant" id="VSP_054726" description="In isoform 6." evidence="11">
    <original>G</original>
    <variation>GRMSHETAAAAVPGGAGASAGSIVSCAENASKVEVIVYTTKSDKTLKQNMNAKDDTLRKRTSLIIVPQQVHDIEVEDEDTKKVDQTKVRENPNRNSTASMDSCVSNTTSQSNQSSGSSSSTTSSSGSSSGSEDAHAAYQDLQNGNAGQDLNSPSPVPRCHSSSSTSSVSESTSCSSSADYSLREQLKNFANRNSEGGGTIDSTARLIKGMSLPVGDQSVQSVAPALCDSLLSPQEVPLGRRYAEVAQFKGHPKAR</variation>
    <location>
        <position position="266"/>
    </location>
</feature>
<feature type="splice variant" id="VSP_028887" description="In isoform 4." evidence="9 10">
    <original>YAEPADALRQAGLTSAATAILRRQHRSQMLHASQRHSEPLKAGFGGSGNGAMLQPSDLEKLAGSLDELKPKPKVSQQQQQSQQQQQPTKRARNRIDHWQLDSSWEFMAKQDTGSHAGGDYDTAAIDWQEKENSLGRDSRADGQGKKRTLTIHQIIANRLPDLNLPELVRCSTPPQTAALQPHVLGQDKAGVGCDGSQKSFQSQIGCRLSSYDNVFCQNSFGGIDSAQSDDGTIFSEPWDSSQWDTFLPHDDATINSDTIHLSKCRPALSEDDTIVEELQSTKDGSNGSCNQDTLKANRNGAGHHKLNNGNGNGKANNRPKVATILRNPSMRDREVLC</original>
    <variation>MSWFRRSSRAPSVSRPHSPASLNQPHQNPTDQQHQRDMSKSLSWLDERCIERQEPEEFFHDPDHVRHYKEEAQFLSIMSEWEIIEHPPQSNYFSADFEEELLQQRTQLPISSLEDINHRDTTDMVKDKESKAEARSKPKRKRKFLELLFVDNIQTGIALPQDENESPQRAPSSPTAVLCKKSRKSNSTNSIAIPSTIVATCPQQVLKDCRINRKQLKTEALASSIMGAIGKCPAGEDSMPGPLINEPDQCHPGEQNTCDHYDIKQFFHLDEQGNILLNMAHIVECQALGLCLQSQSRRLYRRYRRGCECADEDFCQSRGCCRILRRLLRLLCELIAG</variation>
    <location>
        <begin position="1069"/>
        <end position="1405"/>
    </location>
</feature>
<feature type="splice variant" id="VSP_054727" description="In isoform 9." evidence="11">
    <original>QQPTKRARNRIDHWQLDSSWEFMAKQDTGSHAGGDYDTAAIDWQEKENSLGRDSRADGQGKKRTLTIHQIIANRLPDLNLPELVRCSTPPQTAALQPHVLGQDKAGVGCDGSQKSFQSQIGCRLSSYDNVFCQNSFGGIDSAQSDDGTIFSEPWDSSQWDTFLPHDDATINSDTIHLSKCRPALSEDDTIVEELQSTKDGSNGSCNQDTLKANRNGAGHHKLNNGNGNGKANNRPKVATILRNPSMRDREVLC</original>
    <variation>MSWFRRSSRAPSVSRPHSPASLNQPHQNPTDQQHQRDMSKSLSWLDERCIERQEPEEFFHDPDHVRHYKEEAQFLSIMSEWEIIEHPPQSNYFSADFEEELLQQRTQLPISSLEDINHRDTTDMVKDKESKAEAKSKPKRKRKFLELLFVDNIQTGIALPQDENESPQRAPSSPTAVLCKKSRKSNSTNSIAIPSTIVATCPQQVLKDCRINRKQLKTEALASSIMGAIGKCPAGEDSMPGPLINEPDQCHPG</variation>
    <location>
        <begin position="1153"/>
        <end position="1405"/>
    </location>
</feature>
<feature type="splice variant" id="VSP_054728" description="In isoform 8." evidence="11">
    <original>QSTKDGSNGSCNQDTLKANRNGAGHHKLNNGNGNGKANNRPKVATILRNPSMRDREVLC</original>
    <variation>MAHIVECQALGLCLQSQSRRLYRRYRRGCECADEDFCQSRGCCRILRRLLRLLCELIAG</variation>
    <location>
        <begin position="1347"/>
        <end position="1405"/>
    </location>
</feature>
<feature type="splice variant" id="VSP_007624" description="In isoform 3." evidence="8 10">
    <original>H</original>
    <variation>E</variation>
    <location>
        <position position="1406"/>
    </location>
</feature>
<feature type="splice variant" id="VSP_007625" description="In isoform 3." evidence="8 10">
    <location>
        <begin position="1407"/>
        <end position="1789"/>
    </location>
</feature>
<feature type="sequence conflict" description="In Ref. 1; AAK28059." evidence="11" ref="1">
    <original>V</original>
    <variation>I</variation>
    <location>
        <position position="46"/>
    </location>
</feature>
<feature type="sequence conflict" description="In Ref. 1; AAK28059." evidence="11" ref="1">
    <original>A</original>
    <variation>ATA</variation>
    <location>
        <position position="51"/>
    </location>
</feature>
<feature type="sequence conflict" description="In Ref. 1; AAK28059." evidence="11" ref="1">
    <original>A</original>
    <variation>T</variation>
    <location>
        <position position="55"/>
    </location>
</feature>
<feature type="sequence conflict" description="In Ref. 1; AAK28059." evidence="11" ref="1">
    <original>ISNK</original>
    <variation>VSN</variation>
    <location>
        <begin position="91"/>
        <end position="94"/>
    </location>
</feature>
<feature type="sequence conflict" description="In Ref. 1; AAK28059/AAK28060 and 4; AAM52765." evidence="11" ref="1 4">
    <original>S</original>
    <variation>A</variation>
    <location>
        <position position="283"/>
    </location>
</feature>
<feature type="sequence conflict" description="In Ref. 1; AAK28059/AAK28060 and 4; AAM52765." evidence="11" ref="1 4">
    <original>H</original>
    <variation>N</variation>
    <location>
        <position position="303"/>
    </location>
</feature>
<feature type="sequence conflict" description="In Ref. 1; AAK28059/AAK28060 and 4; AAM52765." evidence="11" ref="1 4">
    <original>S</original>
    <variation>I</variation>
    <location>
        <position position="369"/>
    </location>
</feature>
<feature type="sequence conflict" description="In Ref. 1; AAK28059/AAK28060 and 4; AAL89958/AAM52765." evidence="11" ref="1 4">
    <original>L</original>
    <variation>S</variation>
    <location>
        <position position="600"/>
    </location>
</feature>
<feature type="sequence conflict" description="In Ref. 1; AAK28059/AAK28060 and 4; AAL89958/AAM52765." evidence="11" ref="1 4">
    <original>K</original>
    <variation>Q</variation>
    <location>
        <position position="1036"/>
    </location>
</feature>
<feature type="sequence conflict" description="In Ref. 1; AAK28059/AAK28060 and 4; AAL89958/AAM52765." evidence="11" ref="1 4">
    <original>G</original>
    <variation>A</variation>
    <location>
        <position position="1379"/>
    </location>
</feature>
<feature type="sequence conflict" description="In Ref. 1; AAK28059/AAK28060." evidence="11" ref="1">
    <original>Y</original>
    <variation>N</variation>
    <location>
        <position position="1544"/>
    </location>
</feature>
<feature type="sequence conflict" description="In Ref. 1; AAK28059/AAK28060." evidence="11" ref="1">
    <original>L</original>
    <variation>F</variation>
    <location>
        <position position="1569"/>
    </location>
</feature>
<feature type="sequence conflict" description="In Ref. 5; ABA81813." evidence="11" ref="5">
    <original>P</original>
    <variation>L</variation>
    <location>
        <position position="1782"/>
    </location>
</feature>
<feature type="sequence conflict" description="In Ref. 5; ABA81813." evidence="11" ref="5">
    <original>P</original>
    <variation>L</variation>
    <location sequence="Q8MQW8-4">
        <position position="714"/>
    </location>
</feature>
<comment type="function">
    <text evidence="1">Potential Ras effector protein. May function as a guanine nucleotide exchange (GEF), by exchanging bound GDP for free GTP (By similarity).</text>
</comment>
<comment type="alternative products">
    <event type="alternative splicing"/>
    <isoform>
        <id>Q8MQW8-1</id>
        <name>1</name>
        <name>Sprint-a</name>
        <name>A</name>
        <name>L</name>
        <name>M</name>
        <sequence type="displayed"/>
    </isoform>
    <isoform>
        <id>Q8MQW8-2</id>
        <name>2</name>
        <name>Sprint-b</name>
        <name>E</name>
        <name>F</name>
        <name>G</name>
        <sequence type="described" ref="VSP_007621 VSP_007622"/>
    </isoform>
    <isoform>
        <id>Q8MQW8-3</id>
        <name>3</name>
        <name>H</name>
        <name>spri-RN</name>
        <sequence type="described" ref="VSP_007623 VSP_007624 VSP_007625"/>
    </isoform>
    <isoform>
        <id>Q8MQW8-4</id>
        <name>4</name>
        <name>I</name>
        <name>spri-RI</name>
        <sequence type="described" ref="VSP_028886 VSP_028887"/>
    </isoform>
    <isoform>
        <id>Q8MQW8-5</id>
        <name>5</name>
        <name>J</name>
        <sequence type="described" ref="VSP_054723"/>
    </isoform>
    <isoform>
        <id>Q8MQW8-6</id>
        <name>6</name>
        <name>O</name>
        <sequence type="described" ref="VSP_054726"/>
    </isoform>
    <isoform>
        <id>Q8MQW8-7</id>
        <name>7</name>
        <name>N</name>
        <name>R</name>
        <sequence type="described" ref="VSP_054724 VSP_054725"/>
    </isoform>
    <isoform>
        <id>Q8MQW8-8</id>
        <name>8</name>
        <name>P</name>
        <sequence type="described" ref="VSP_054721 VSP_054728"/>
    </isoform>
    <isoform>
        <id>Q8MQW8-9</id>
        <name>9</name>
        <name>Q</name>
        <sequence type="described" ref="VSP_054722 VSP_054727"/>
    </isoform>
</comment>
<comment type="tissue specificity">
    <text evidence="6">In late cellular blastoderm embryos, it is expressed in the posterior end. Then, as development proceeds, it is expressed in the developing midgut, amnioserosa and in a specific subset of CNS neurons. Isoform 1 is expressed earlier in developing midgut and amnioserosa, but is not expressed in the CNS.</text>
</comment>
<comment type="developmental stage">
    <text evidence="6">Expressed both maternally and zygotically.</text>
</comment>
<comment type="similarity">
    <text evidence="11">Belongs to the RIN (Ras interaction/interference) family.</text>
</comment>
<comment type="sequence caution" evidence="11">
    <conflict type="erroneous initiation">
        <sequence resource="EMBL-CDS" id="AAM52775"/>
    </conflict>
    <text>Truncated N-terminus.</text>
</comment>
<name>SPRI_DROME</name>
<keyword id="KW-0025">Alternative splicing</keyword>
<keyword id="KW-0217">Developmental protein</keyword>
<keyword id="KW-0343">GTPase activation</keyword>
<keyword id="KW-1185">Reference proteome</keyword>
<keyword id="KW-0727">SH2 domain</keyword>
<evidence type="ECO:0000250" key="1"/>
<evidence type="ECO:0000255" key="2">
    <source>
        <dbReference type="PROSITE-ProRule" id="PRU00166"/>
    </source>
</evidence>
<evidence type="ECO:0000255" key="3">
    <source>
        <dbReference type="PROSITE-ProRule" id="PRU00191"/>
    </source>
</evidence>
<evidence type="ECO:0000255" key="4">
    <source>
        <dbReference type="PROSITE-ProRule" id="PRU00550"/>
    </source>
</evidence>
<evidence type="ECO:0000256" key="5">
    <source>
        <dbReference type="SAM" id="MobiDB-lite"/>
    </source>
</evidence>
<evidence type="ECO:0000269" key="6">
    <source>
    </source>
</evidence>
<evidence type="ECO:0000303" key="7">
    <source>
    </source>
</evidence>
<evidence type="ECO:0000303" key="8">
    <source>
    </source>
</evidence>
<evidence type="ECO:0000303" key="9">
    <source ref="5"/>
</evidence>
<evidence type="ECO:0000303" key="10">
    <source ref="6"/>
</evidence>
<evidence type="ECO:0000305" key="11"/>
<dbReference type="EMBL" id="AF312692">
    <property type="protein sequence ID" value="AAK28059.1"/>
    <property type="molecule type" value="mRNA"/>
</dbReference>
<dbReference type="EMBL" id="AF312693">
    <property type="protein sequence ID" value="AAK28060.1"/>
    <property type="molecule type" value="mRNA"/>
</dbReference>
<dbReference type="EMBL" id="AE014298">
    <property type="protein sequence ID" value="AAF46597.3"/>
    <property type="molecule type" value="Genomic_DNA"/>
</dbReference>
<dbReference type="EMBL" id="AE014298">
    <property type="protein sequence ID" value="AAF46599.2"/>
    <property type="molecule type" value="Genomic_DNA"/>
</dbReference>
<dbReference type="EMBL" id="AE014298">
    <property type="protein sequence ID" value="AAO41647.2"/>
    <property type="molecule type" value="Genomic_DNA"/>
</dbReference>
<dbReference type="EMBL" id="AE014298">
    <property type="protein sequence ID" value="AAS65425.1"/>
    <property type="molecule type" value="Genomic_DNA"/>
</dbReference>
<dbReference type="EMBL" id="AE014298">
    <property type="protein sequence ID" value="AGB95256.1"/>
    <property type="molecule type" value="Genomic_DNA"/>
</dbReference>
<dbReference type="EMBL" id="AE014298">
    <property type="protein sequence ID" value="AGB95257.1"/>
    <property type="molecule type" value="Genomic_DNA"/>
</dbReference>
<dbReference type="EMBL" id="AE014298">
    <property type="protein sequence ID" value="AGB95258.1"/>
    <property type="molecule type" value="Genomic_DNA"/>
</dbReference>
<dbReference type="EMBL" id="AE014298">
    <property type="protein sequence ID" value="AGB95259.1"/>
    <property type="molecule type" value="Genomic_DNA"/>
</dbReference>
<dbReference type="EMBL" id="AE014298">
    <property type="protein sequence ID" value="AGB95260.1"/>
    <property type="molecule type" value="Genomic_DNA"/>
</dbReference>
<dbReference type="EMBL" id="AE014298">
    <property type="protein sequence ID" value="AGB95261.1"/>
    <property type="molecule type" value="Genomic_DNA"/>
</dbReference>
<dbReference type="EMBL" id="AE014298">
    <property type="protein sequence ID" value="AGB95262.1"/>
    <property type="molecule type" value="Genomic_DNA"/>
</dbReference>
<dbReference type="EMBL" id="AE014298">
    <property type="protein sequence ID" value="AGB95263.1"/>
    <property type="molecule type" value="Genomic_DNA"/>
</dbReference>
<dbReference type="EMBL" id="AE014298">
    <property type="protein sequence ID" value="AGB95264.1"/>
    <property type="molecule type" value="Genomic_DNA"/>
</dbReference>
<dbReference type="EMBL" id="AY089220">
    <property type="protein sequence ID" value="AAL89958.1"/>
    <property type="molecule type" value="mRNA"/>
</dbReference>
<dbReference type="EMBL" id="AY122253">
    <property type="protein sequence ID" value="AAM52765.1"/>
    <property type="molecule type" value="mRNA"/>
</dbReference>
<dbReference type="EMBL" id="AY122263">
    <property type="protein sequence ID" value="AAM52775.1"/>
    <property type="status" value="ALT_INIT"/>
    <property type="molecule type" value="mRNA"/>
</dbReference>
<dbReference type="EMBL" id="BT023879">
    <property type="protein sequence ID" value="ABA81813.1"/>
    <property type="molecule type" value="mRNA"/>
</dbReference>
<dbReference type="EMBL" id="BT150303">
    <property type="protein sequence ID" value="AGW24085.1"/>
    <property type="molecule type" value="mRNA"/>
</dbReference>
<dbReference type="EMBL" id="BT150339">
    <property type="protein sequence ID" value="AGW25621.1"/>
    <property type="molecule type" value="mRNA"/>
</dbReference>
<dbReference type="RefSeq" id="NP_001096941.2">
    <molecule id="Q8MQW8-5"/>
    <property type="nucleotide sequence ID" value="NM_001103471.2"/>
</dbReference>
<dbReference type="RefSeq" id="NP_001096944.1">
    <property type="nucleotide sequence ID" value="NM_001103474.2"/>
</dbReference>
<dbReference type="RefSeq" id="NP_001259413.1">
    <molecule id="Q8MQW8-2"/>
    <property type="nucleotide sequence ID" value="NM_001272484.1"/>
</dbReference>
<dbReference type="RefSeq" id="NP_001259414.1">
    <molecule id="Q8MQW8-2"/>
    <property type="nucleotide sequence ID" value="NM_001272485.1"/>
</dbReference>
<dbReference type="RefSeq" id="NP_001259415.1">
    <molecule id="Q8MQW8-1"/>
    <property type="nucleotide sequence ID" value="NM_001272486.1"/>
</dbReference>
<dbReference type="RefSeq" id="NP_001259416.1">
    <molecule id="Q8MQW8-1"/>
    <property type="nucleotide sequence ID" value="NM_001272487.1"/>
</dbReference>
<dbReference type="RefSeq" id="NP_001259417.1">
    <molecule id="Q8MQW8-7"/>
    <property type="nucleotide sequence ID" value="NM_001272488.1"/>
</dbReference>
<dbReference type="RefSeq" id="NP_001259418.1">
    <molecule id="Q8MQW8-6"/>
    <property type="nucleotide sequence ID" value="NM_001272489.1"/>
</dbReference>
<dbReference type="RefSeq" id="NP_001259419.1">
    <molecule id="Q8MQW8-8"/>
    <property type="nucleotide sequence ID" value="NM_001272490.1"/>
</dbReference>
<dbReference type="RefSeq" id="NP_001259420.1">
    <molecule id="Q8MQW8-9"/>
    <property type="nucleotide sequence ID" value="NM_001272491.1"/>
</dbReference>
<dbReference type="RefSeq" id="NP_001259421.1">
    <molecule id="Q8MQW8-7"/>
    <property type="nucleotide sequence ID" value="NM_001272492.1"/>
</dbReference>
<dbReference type="RefSeq" id="NP_788896.1">
    <molecule id="Q8MQW8-2"/>
    <property type="nucleotide sequence ID" value="NM_176723.3"/>
</dbReference>
<dbReference type="RefSeq" id="NP_996401.1">
    <molecule id="Q8MQW8-1"/>
    <property type="nucleotide sequence ID" value="NM_206678.2"/>
</dbReference>
<dbReference type="BioGRID" id="58410">
    <property type="interactions" value="18"/>
</dbReference>
<dbReference type="FunCoup" id="Q8MQW8">
    <property type="interactions" value="496"/>
</dbReference>
<dbReference type="IntAct" id="Q8MQW8">
    <property type="interactions" value="4"/>
</dbReference>
<dbReference type="STRING" id="7227.FBpp0302587"/>
<dbReference type="GlyGen" id="Q8MQW8">
    <property type="glycosylation" value="5 sites"/>
</dbReference>
<dbReference type="EnsemblMetazoa" id="FBtr0112688">
    <molecule id="Q8MQW8-1"/>
    <property type="protein sequence ID" value="FBpp0111600"/>
    <property type="gene ID" value="FBgn0085443"/>
</dbReference>
<dbReference type="EnsemblMetazoa" id="FBtr0112689">
    <molecule id="Q8MQW8-2"/>
    <property type="protein sequence ID" value="FBpp0111601"/>
    <property type="gene ID" value="FBgn0085443"/>
</dbReference>
<dbReference type="EnsemblMetazoa" id="FBtr0310291">
    <molecule id="Q8MQW8-2"/>
    <property type="protein sequence ID" value="FBpp0301974"/>
    <property type="gene ID" value="FBgn0085443"/>
</dbReference>
<dbReference type="EnsemblMetazoa" id="FBtr0310292">
    <molecule id="Q8MQW8-2"/>
    <property type="protein sequence ID" value="FBpp0301975"/>
    <property type="gene ID" value="FBgn0085443"/>
</dbReference>
<dbReference type="EnsemblMetazoa" id="FBtr0310293">
    <molecule id="Q8MQW8-5"/>
    <property type="protein sequence ID" value="FBpp0301976"/>
    <property type="gene ID" value="FBgn0085443"/>
</dbReference>
<dbReference type="EnsemblMetazoa" id="FBtr0310295">
    <molecule id="Q8MQW8-1"/>
    <property type="protein sequence ID" value="FBpp0301978"/>
    <property type="gene ID" value="FBgn0085443"/>
</dbReference>
<dbReference type="EnsemblMetazoa" id="FBtr0310296">
    <molecule id="Q8MQW8-1"/>
    <property type="protein sequence ID" value="FBpp0301979"/>
    <property type="gene ID" value="FBgn0085443"/>
</dbReference>
<dbReference type="EnsemblMetazoa" id="FBtr0310438">
    <molecule id="Q8MQW8-7"/>
    <property type="protein sequence ID" value="FBpp0302586"/>
    <property type="gene ID" value="FBgn0085443"/>
</dbReference>
<dbReference type="EnsemblMetazoa" id="FBtr0310439">
    <molecule id="Q8MQW8-6"/>
    <property type="protein sequence ID" value="FBpp0302587"/>
    <property type="gene ID" value="FBgn0085443"/>
</dbReference>
<dbReference type="EnsemblMetazoa" id="FBtr0336902">
    <molecule id="Q8MQW8-8"/>
    <property type="protein sequence ID" value="FBpp0307842"/>
    <property type="gene ID" value="FBgn0085443"/>
</dbReference>
<dbReference type="EnsemblMetazoa" id="FBtr0336903">
    <molecule id="Q8MQW8-9"/>
    <property type="protein sequence ID" value="FBpp0307843"/>
    <property type="gene ID" value="FBgn0085443"/>
</dbReference>
<dbReference type="EnsemblMetazoa" id="FBtr0336904">
    <molecule id="Q8MQW8-7"/>
    <property type="protein sequence ID" value="FBpp0307844"/>
    <property type="gene ID" value="FBgn0085443"/>
</dbReference>
<dbReference type="GeneID" id="31987"/>
<dbReference type="KEGG" id="dme:Dmel_CG34414"/>
<dbReference type="UCSC" id="CG34414-RA">
    <property type="organism name" value="d. melanogaster"/>
</dbReference>
<dbReference type="AGR" id="FB:FBgn0085443"/>
<dbReference type="CTD" id="31987"/>
<dbReference type="FlyBase" id="FBgn0085443">
    <property type="gene designation" value="spri"/>
</dbReference>
<dbReference type="VEuPathDB" id="VectorBase:FBgn0085443"/>
<dbReference type="eggNOG" id="KOG2320">
    <property type="taxonomic scope" value="Eukaryota"/>
</dbReference>
<dbReference type="GeneTree" id="ENSGT00940000169598"/>
<dbReference type="InParanoid" id="Q8MQW8"/>
<dbReference type="OMA" id="CKMIAHK"/>
<dbReference type="OrthoDB" id="21085at2759"/>
<dbReference type="PhylomeDB" id="Q8MQW8"/>
<dbReference type="Reactome" id="R-DME-8876198">
    <property type="pathway name" value="RAB GEFs exchange GTP for GDP on RABs"/>
</dbReference>
<dbReference type="SignaLink" id="Q8MQW8"/>
<dbReference type="BioGRID-ORCS" id="31987">
    <property type="hits" value="0 hits in 3 CRISPR screens"/>
</dbReference>
<dbReference type="ChiTaRS" id="spri">
    <property type="organism name" value="fly"/>
</dbReference>
<dbReference type="GenomeRNAi" id="31987"/>
<dbReference type="PRO" id="PR:Q8MQW8"/>
<dbReference type="Proteomes" id="UP000000803">
    <property type="component" value="Chromosome X"/>
</dbReference>
<dbReference type="Bgee" id="FBgn0085443">
    <property type="expression patterns" value="Expressed in dorsal appendage forming follicle cell in ovary and 211 other cell types or tissues"/>
</dbReference>
<dbReference type="ExpressionAtlas" id="Q8MQW8">
    <property type="expression patterns" value="baseline and differential"/>
</dbReference>
<dbReference type="GO" id="GO:0005938">
    <property type="term" value="C:cell cortex"/>
    <property type="evidence" value="ECO:0000314"/>
    <property type="project" value="FlyBase"/>
</dbReference>
<dbReference type="GO" id="GO:0005829">
    <property type="term" value="C:cytosol"/>
    <property type="evidence" value="ECO:0000318"/>
    <property type="project" value="GO_Central"/>
</dbReference>
<dbReference type="GO" id="GO:0030139">
    <property type="term" value="C:endocytic vesicle"/>
    <property type="evidence" value="ECO:0000314"/>
    <property type="project" value="FlyBase"/>
</dbReference>
<dbReference type="GO" id="GO:0005096">
    <property type="term" value="F:GTPase activator activity"/>
    <property type="evidence" value="ECO:0007669"/>
    <property type="project" value="UniProtKB-KW"/>
</dbReference>
<dbReference type="GO" id="GO:0005085">
    <property type="term" value="F:guanyl-nucleotide exchange factor activity"/>
    <property type="evidence" value="ECO:0000250"/>
    <property type="project" value="FlyBase"/>
</dbReference>
<dbReference type="GO" id="GO:0019901">
    <property type="term" value="F:protein kinase binding"/>
    <property type="evidence" value="ECO:0000353"/>
    <property type="project" value="FlyBase"/>
</dbReference>
<dbReference type="GO" id="GO:0030971">
    <property type="term" value="F:receptor tyrosine kinase binding"/>
    <property type="evidence" value="ECO:0000353"/>
    <property type="project" value="FlyBase"/>
</dbReference>
<dbReference type="GO" id="GO:0031267">
    <property type="term" value="F:small GTPase binding"/>
    <property type="evidence" value="ECO:0000353"/>
    <property type="project" value="FlyBase"/>
</dbReference>
<dbReference type="GO" id="GO:0048675">
    <property type="term" value="P:axon extension"/>
    <property type="evidence" value="ECO:0000316"/>
    <property type="project" value="FlyBase"/>
</dbReference>
<dbReference type="GO" id="GO:1903688">
    <property type="term" value="P:positive regulation of border follicle cell migration"/>
    <property type="evidence" value="ECO:0000316"/>
    <property type="project" value="FlyBase"/>
</dbReference>
<dbReference type="GO" id="GO:0048260">
    <property type="term" value="P:positive regulation of receptor-mediated endocytosis"/>
    <property type="evidence" value="ECO:0000315"/>
    <property type="project" value="FlyBase"/>
</dbReference>
<dbReference type="GO" id="GO:0032483">
    <property type="term" value="P:regulation of Rab protein signal transduction"/>
    <property type="evidence" value="ECO:0000255"/>
    <property type="project" value="FlyBase"/>
</dbReference>
<dbReference type="GO" id="GO:0007165">
    <property type="term" value="P:signal transduction"/>
    <property type="evidence" value="ECO:0007669"/>
    <property type="project" value="InterPro"/>
</dbReference>
<dbReference type="GO" id="GO:0016192">
    <property type="term" value="P:vesicle-mediated transport"/>
    <property type="evidence" value="ECO:0007669"/>
    <property type="project" value="InterPro"/>
</dbReference>
<dbReference type="CDD" id="cd01776">
    <property type="entry name" value="RA_Rin"/>
    <property type="match status" value="1"/>
</dbReference>
<dbReference type="FunFam" id="1.20.1050.80:FF:000010">
    <property type="entry name" value="protein sprint isoform X2"/>
    <property type="match status" value="1"/>
</dbReference>
<dbReference type="Gene3D" id="3.30.505.10">
    <property type="entry name" value="SH2 domain"/>
    <property type="match status" value="1"/>
</dbReference>
<dbReference type="Gene3D" id="1.20.1050.80">
    <property type="entry name" value="VPS9 domain"/>
    <property type="match status" value="1"/>
</dbReference>
<dbReference type="InterPro" id="IPR000159">
    <property type="entry name" value="RA_dom"/>
</dbReference>
<dbReference type="InterPro" id="IPR000980">
    <property type="entry name" value="SH2"/>
</dbReference>
<dbReference type="InterPro" id="IPR036860">
    <property type="entry name" value="SH2_dom_sf"/>
</dbReference>
<dbReference type="InterPro" id="IPR003123">
    <property type="entry name" value="VPS9"/>
</dbReference>
<dbReference type="InterPro" id="IPR045046">
    <property type="entry name" value="Vps9-like"/>
</dbReference>
<dbReference type="InterPro" id="IPR037191">
    <property type="entry name" value="VPS9_dom_sf"/>
</dbReference>
<dbReference type="PANTHER" id="PTHR23101:SF104">
    <property type="entry name" value="PROTEIN SPRINT"/>
    <property type="match status" value="1"/>
</dbReference>
<dbReference type="PANTHER" id="PTHR23101">
    <property type="entry name" value="RAB GDP/GTP EXCHANGE FACTOR"/>
    <property type="match status" value="1"/>
</dbReference>
<dbReference type="Pfam" id="PF00788">
    <property type="entry name" value="RA"/>
    <property type="match status" value="1"/>
</dbReference>
<dbReference type="Pfam" id="PF23268">
    <property type="entry name" value="RIN1"/>
    <property type="match status" value="1"/>
</dbReference>
<dbReference type="Pfam" id="PF00017">
    <property type="entry name" value="SH2"/>
    <property type="match status" value="1"/>
</dbReference>
<dbReference type="Pfam" id="PF02204">
    <property type="entry name" value="VPS9"/>
    <property type="match status" value="1"/>
</dbReference>
<dbReference type="SMART" id="SM00314">
    <property type="entry name" value="RA"/>
    <property type="match status" value="1"/>
</dbReference>
<dbReference type="SMART" id="SM00252">
    <property type="entry name" value="SH2"/>
    <property type="match status" value="1"/>
</dbReference>
<dbReference type="SMART" id="SM00167">
    <property type="entry name" value="VPS9"/>
    <property type="match status" value="1"/>
</dbReference>
<dbReference type="SUPFAM" id="SSF55550">
    <property type="entry name" value="SH2 domain"/>
    <property type="match status" value="1"/>
</dbReference>
<dbReference type="SUPFAM" id="SSF109993">
    <property type="entry name" value="VPS9 domain"/>
    <property type="match status" value="1"/>
</dbReference>
<dbReference type="PROSITE" id="PS50200">
    <property type="entry name" value="RA"/>
    <property type="match status" value="1"/>
</dbReference>
<dbReference type="PROSITE" id="PS50001">
    <property type="entry name" value="SH2"/>
    <property type="match status" value="1"/>
</dbReference>
<dbReference type="PROSITE" id="PS51205">
    <property type="entry name" value="VPS9"/>
    <property type="match status" value="1"/>
</dbReference>